<accession>Q821V5</accession>
<proteinExistence type="inferred from homology"/>
<name>UVRC_CHLCV</name>
<sequence>MRVKDFTPKLVPTSPGVYLMKDDSGEVLYIGKAKNLRNRITTYFQKQGDSRERIPFLMKKTTTIETILVSNETEALLLENNLIKKHHPKYNVLLKDDKTFFCLAISLTHPWPKIDAIRTKAITSSKRQIIFGPYVSAEACRTLLEVISQWFPLRTCSNREFASRRRPCILYEMKRCLAPCVHLCTHEEYEETLEKAVLFLKGKVSEIIQDLEKSIEKASQEQKFEQAGIYYRTLKLIQQAMEKQHVEKFHFQNIDAIGLYRKYQETVITVLTVRSGKLLGARHFPFSENAQEDTDLLSSFILQYYANQPQTPKEILTPIPLNIPELPYLLNKDTPPQLRSPKTGYGKELLTLAKNNAKVHAETTTQSSSLPYEEMKKILKSPDYPYRIECYDNAHLQGSHGVGVYIVYENDAFSPKSYRTFSISSLAHNDLATFHEVLSRRFSSLTSSLPDMIVIDGGRAQYSQAKKTLKELNLTGIQVVSLAKEASNHSSSLRNEKLFCDTFPQGIQLAPTSKLLQFFQKLRDEAHRFAISKHRRKRYKDLLFPQEKIPGIGEVKRKRLLQKFKSWKQVMKASQGELEAIPGLTKKDIQQLLAKQVEDSKLTED</sequence>
<comment type="function">
    <text evidence="1">The UvrABC repair system catalyzes the recognition and processing of DNA lesions. UvrC both incises the 5' and 3' sides of the lesion. The N-terminal half is responsible for the 3' incision and the C-terminal half is responsible for the 5' incision.</text>
</comment>
<comment type="subunit">
    <text evidence="1">Interacts with UvrB in an incision complex.</text>
</comment>
<comment type="subcellular location">
    <subcellularLocation>
        <location evidence="1">Cytoplasm</location>
    </subcellularLocation>
</comment>
<comment type="similarity">
    <text evidence="1">Belongs to the UvrC family.</text>
</comment>
<keyword id="KW-0963">Cytoplasm</keyword>
<keyword id="KW-0227">DNA damage</keyword>
<keyword id="KW-0228">DNA excision</keyword>
<keyword id="KW-0234">DNA repair</keyword>
<keyword id="KW-0267">Excision nuclease</keyword>
<keyword id="KW-0742">SOS response</keyword>
<dbReference type="EMBL" id="AE015925">
    <property type="protein sequence ID" value="AAP05571.1"/>
    <property type="molecule type" value="Genomic_DNA"/>
</dbReference>
<dbReference type="RefSeq" id="WP_011006785.1">
    <property type="nucleotide sequence ID" value="NC_003361.3"/>
</dbReference>
<dbReference type="SMR" id="Q821V5"/>
<dbReference type="STRING" id="227941.CCA_00830"/>
<dbReference type="KEGG" id="cca:CCA_00830"/>
<dbReference type="eggNOG" id="COG0322">
    <property type="taxonomic scope" value="Bacteria"/>
</dbReference>
<dbReference type="HOGENOM" id="CLU_014841_3_2_0"/>
<dbReference type="OrthoDB" id="9804933at2"/>
<dbReference type="Proteomes" id="UP000002193">
    <property type="component" value="Chromosome"/>
</dbReference>
<dbReference type="GO" id="GO:0005737">
    <property type="term" value="C:cytoplasm"/>
    <property type="evidence" value="ECO:0007669"/>
    <property type="project" value="UniProtKB-SubCell"/>
</dbReference>
<dbReference type="GO" id="GO:0009380">
    <property type="term" value="C:excinuclease repair complex"/>
    <property type="evidence" value="ECO:0007669"/>
    <property type="project" value="InterPro"/>
</dbReference>
<dbReference type="GO" id="GO:0003677">
    <property type="term" value="F:DNA binding"/>
    <property type="evidence" value="ECO:0007669"/>
    <property type="project" value="UniProtKB-UniRule"/>
</dbReference>
<dbReference type="GO" id="GO:0009381">
    <property type="term" value="F:excinuclease ABC activity"/>
    <property type="evidence" value="ECO:0007669"/>
    <property type="project" value="UniProtKB-UniRule"/>
</dbReference>
<dbReference type="GO" id="GO:0006289">
    <property type="term" value="P:nucleotide-excision repair"/>
    <property type="evidence" value="ECO:0007669"/>
    <property type="project" value="UniProtKB-UniRule"/>
</dbReference>
<dbReference type="GO" id="GO:0009432">
    <property type="term" value="P:SOS response"/>
    <property type="evidence" value="ECO:0007669"/>
    <property type="project" value="UniProtKB-UniRule"/>
</dbReference>
<dbReference type="CDD" id="cd10434">
    <property type="entry name" value="GIY-YIG_UvrC_Cho"/>
    <property type="match status" value="1"/>
</dbReference>
<dbReference type="FunFam" id="3.40.1440.10:FF:000001">
    <property type="entry name" value="UvrABC system protein C"/>
    <property type="match status" value="1"/>
</dbReference>
<dbReference type="Gene3D" id="1.10.150.20">
    <property type="entry name" value="5' to 3' exonuclease, C-terminal subdomain"/>
    <property type="match status" value="1"/>
</dbReference>
<dbReference type="Gene3D" id="3.40.1440.10">
    <property type="entry name" value="GIY-YIG endonuclease"/>
    <property type="match status" value="1"/>
</dbReference>
<dbReference type="Gene3D" id="3.30.420.340">
    <property type="entry name" value="UvrC, RNAse H endonuclease domain"/>
    <property type="match status" value="1"/>
</dbReference>
<dbReference type="HAMAP" id="MF_00203">
    <property type="entry name" value="UvrC"/>
    <property type="match status" value="1"/>
</dbReference>
<dbReference type="InterPro" id="IPR000305">
    <property type="entry name" value="GIY-YIG_endonuc"/>
</dbReference>
<dbReference type="InterPro" id="IPR035901">
    <property type="entry name" value="GIY-YIG_endonuc_sf"/>
</dbReference>
<dbReference type="InterPro" id="IPR047296">
    <property type="entry name" value="GIY-YIG_UvrC_Cho"/>
</dbReference>
<dbReference type="InterPro" id="IPR010994">
    <property type="entry name" value="RuvA_2-like"/>
</dbReference>
<dbReference type="InterPro" id="IPR001943">
    <property type="entry name" value="UVR_dom"/>
</dbReference>
<dbReference type="InterPro" id="IPR036876">
    <property type="entry name" value="UVR_dom_sf"/>
</dbReference>
<dbReference type="InterPro" id="IPR050066">
    <property type="entry name" value="UvrABC_protein_C"/>
</dbReference>
<dbReference type="InterPro" id="IPR004791">
    <property type="entry name" value="UvrC"/>
</dbReference>
<dbReference type="InterPro" id="IPR001162">
    <property type="entry name" value="UvrC_RNase_H_dom"/>
</dbReference>
<dbReference type="InterPro" id="IPR038476">
    <property type="entry name" value="UvrC_RNase_H_dom_sf"/>
</dbReference>
<dbReference type="NCBIfam" id="TIGR00194">
    <property type="entry name" value="uvrC"/>
    <property type="match status" value="1"/>
</dbReference>
<dbReference type="PANTHER" id="PTHR30562:SF1">
    <property type="entry name" value="UVRABC SYSTEM PROTEIN C"/>
    <property type="match status" value="1"/>
</dbReference>
<dbReference type="PANTHER" id="PTHR30562">
    <property type="entry name" value="UVRC/OXIDOREDUCTASE"/>
    <property type="match status" value="1"/>
</dbReference>
<dbReference type="Pfam" id="PF01541">
    <property type="entry name" value="GIY-YIG"/>
    <property type="match status" value="1"/>
</dbReference>
<dbReference type="Pfam" id="PF14520">
    <property type="entry name" value="HHH_5"/>
    <property type="match status" value="1"/>
</dbReference>
<dbReference type="Pfam" id="PF22920">
    <property type="entry name" value="UvrC_RNaseH"/>
    <property type="match status" value="1"/>
</dbReference>
<dbReference type="Pfam" id="PF08459">
    <property type="entry name" value="UvrC_RNaseH_dom"/>
    <property type="match status" value="1"/>
</dbReference>
<dbReference type="SMART" id="SM00465">
    <property type="entry name" value="GIYc"/>
    <property type="match status" value="1"/>
</dbReference>
<dbReference type="SUPFAM" id="SSF46600">
    <property type="entry name" value="C-terminal UvrC-binding domain of UvrB"/>
    <property type="match status" value="1"/>
</dbReference>
<dbReference type="SUPFAM" id="SSF82771">
    <property type="entry name" value="GIY-YIG endonuclease"/>
    <property type="match status" value="1"/>
</dbReference>
<dbReference type="SUPFAM" id="SSF47781">
    <property type="entry name" value="RuvA domain 2-like"/>
    <property type="match status" value="1"/>
</dbReference>
<dbReference type="PROSITE" id="PS50164">
    <property type="entry name" value="GIY_YIG"/>
    <property type="match status" value="1"/>
</dbReference>
<dbReference type="PROSITE" id="PS50151">
    <property type="entry name" value="UVR"/>
    <property type="match status" value="1"/>
</dbReference>
<dbReference type="PROSITE" id="PS50165">
    <property type="entry name" value="UVRC"/>
    <property type="match status" value="1"/>
</dbReference>
<protein>
    <recommendedName>
        <fullName evidence="1">UvrABC system protein C</fullName>
        <shortName evidence="1">Protein UvrC</shortName>
    </recommendedName>
    <alternativeName>
        <fullName evidence="1">Excinuclease ABC subunit C</fullName>
    </alternativeName>
</protein>
<gene>
    <name evidence="1" type="primary">uvrC</name>
    <name type="ordered locus">CCA_00830</name>
</gene>
<organism>
    <name type="scientific">Chlamydia caviae (strain ATCC VR-813 / DSM 19441 / 03DC25 / GPIC)</name>
    <name type="common">Chlamydophila caviae</name>
    <dbReference type="NCBI Taxonomy" id="227941"/>
    <lineage>
        <taxon>Bacteria</taxon>
        <taxon>Pseudomonadati</taxon>
        <taxon>Chlamydiota</taxon>
        <taxon>Chlamydiia</taxon>
        <taxon>Chlamydiales</taxon>
        <taxon>Chlamydiaceae</taxon>
        <taxon>Chlamydia/Chlamydophila group</taxon>
        <taxon>Chlamydia</taxon>
    </lineage>
</organism>
<feature type="chain" id="PRO_0000138292" description="UvrABC system protein C">
    <location>
        <begin position="1"/>
        <end position="605"/>
    </location>
</feature>
<feature type="domain" description="GIY-YIG" evidence="1">
    <location>
        <begin position="13"/>
        <end position="92"/>
    </location>
</feature>
<feature type="domain" description="UVR" evidence="1">
    <location>
        <begin position="205"/>
        <end position="240"/>
    </location>
</feature>
<reference key="1">
    <citation type="journal article" date="2003" name="Nucleic Acids Res.">
        <title>Genome sequence of Chlamydophila caviae (Chlamydia psittaci GPIC): examining the role of niche-specific genes in the evolution of the Chlamydiaceae.</title>
        <authorList>
            <person name="Read T.D."/>
            <person name="Myers G.S.A."/>
            <person name="Brunham R.C."/>
            <person name="Nelson W.C."/>
            <person name="Paulsen I.T."/>
            <person name="Heidelberg J.F."/>
            <person name="Holtzapple E.K."/>
            <person name="Khouri H.M."/>
            <person name="Federova N.B."/>
            <person name="Carty H.A."/>
            <person name="Umayam L.A."/>
            <person name="Haft D.H."/>
            <person name="Peterson J.D."/>
            <person name="Beanan M.J."/>
            <person name="White O."/>
            <person name="Salzberg S.L."/>
            <person name="Hsia R.-C."/>
            <person name="McClarty G."/>
            <person name="Rank R.G."/>
            <person name="Bavoil P.M."/>
            <person name="Fraser C.M."/>
        </authorList>
    </citation>
    <scope>NUCLEOTIDE SEQUENCE [LARGE SCALE GENOMIC DNA]</scope>
    <source>
        <strain>ATCC VR-813 / DSM 19441 / 03DC25 / GPIC</strain>
    </source>
</reference>
<evidence type="ECO:0000255" key="1">
    <source>
        <dbReference type="HAMAP-Rule" id="MF_00203"/>
    </source>
</evidence>